<dbReference type="EC" id="2.1.2.11" evidence="1"/>
<dbReference type="EMBL" id="AE016823">
    <property type="protein sequence ID" value="AAS71708.1"/>
    <property type="molecule type" value="Genomic_DNA"/>
</dbReference>
<dbReference type="RefSeq" id="WP_000789319.1">
    <property type="nucleotide sequence ID" value="NC_005823.1"/>
</dbReference>
<dbReference type="SMR" id="Q72MN0"/>
<dbReference type="GeneID" id="61143030"/>
<dbReference type="KEGG" id="lic:LIC_13163"/>
<dbReference type="HOGENOM" id="CLU_036645_1_0_12"/>
<dbReference type="UniPathway" id="UPA00028">
    <property type="reaction ID" value="UER00003"/>
</dbReference>
<dbReference type="Proteomes" id="UP000007037">
    <property type="component" value="Chromosome I"/>
</dbReference>
<dbReference type="GO" id="GO:0005737">
    <property type="term" value="C:cytoplasm"/>
    <property type="evidence" value="ECO:0007669"/>
    <property type="project" value="UniProtKB-SubCell"/>
</dbReference>
<dbReference type="GO" id="GO:0003864">
    <property type="term" value="F:3-methyl-2-oxobutanoate hydroxymethyltransferase activity"/>
    <property type="evidence" value="ECO:0007669"/>
    <property type="project" value="UniProtKB-UniRule"/>
</dbReference>
<dbReference type="GO" id="GO:0000287">
    <property type="term" value="F:magnesium ion binding"/>
    <property type="evidence" value="ECO:0007669"/>
    <property type="project" value="TreeGrafter"/>
</dbReference>
<dbReference type="GO" id="GO:0015940">
    <property type="term" value="P:pantothenate biosynthetic process"/>
    <property type="evidence" value="ECO:0007669"/>
    <property type="project" value="UniProtKB-UniRule"/>
</dbReference>
<dbReference type="CDD" id="cd06557">
    <property type="entry name" value="KPHMT-like"/>
    <property type="match status" value="1"/>
</dbReference>
<dbReference type="FunFam" id="3.20.20.60:FF:000003">
    <property type="entry name" value="3-methyl-2-oxobutanoate hydroxymethyltransferase"/>
    <property type="match status" value="1"/>
</dbReference>
<dbReference type="Gene3D" id="3.20.20.60">
    <property type="entry name" value="Phosphoenolpyruvate-binding domains"/>
    <property type="match status" value="1"/>
</dbReference>
<dbReference type="HAMAP" id="MF_00156">
    <property type="entry name" value="PanB"/>
    <property type="match status" value="1"/>
</dbReference>
<dbReference type="InterPro" id="IPR003700">
    <property type="entry name" value="Pantoate_hydroxy_MeTrfase"/>
</dbReference>
<dbReference type="InterPro" id="IPR015813">
    <property type="entry name" value="Pyrv/PenolPyrv_kinase-like_dom"/>
</dbReference>
<dbReference type="InterPro" id="IPR040442">
    <property type="entry name" value="Pyrv_kinase-like_dom_sf"/>
</dbReference>
<dbReference type="NCBIfam" id="TIGR00222">
    <property type="entry name" value="panB"/>
    <property type="match status" value="1"/>
</dbReference>
<dbReference type="NCBIfam" id="NF001452">
    <property type="entry name" value="PRK00311.1"/>
    <property type="match status" value="1"/>
</dbReference>
<dbReference type="PANTHER" id="PTHR20881">
    <property type="entry name" value="3-METHYL-2-OXOBUTANOATE HYDROXYMETHYLTRANSFERASE"/>
    <property type="match status" value="1"/>
</dbReference>
<dbReference type="PANTHER" id="PTHR20881:SF0">
    <property type="entry name" value="3-METHYL-2-OXOBUTANOATE HYDROXYMETHYLTRANSFERASE"/>
    <property type="match status" value="1"/>
</dbReference>
<dbReference type="Pfam" id="PF02548">
    <property type="entry name" value="Pantoate_transf"/>
    <property type="match status" value="1"/>
</dbReference>
<dbReference type="PIRSF" id="PIRSF000388">
    <property type="entry name" value="Pantoate_hydroxy_MeTrfase"/>
    <property type="match status" value="1"/>
</dbReference>
<dbReference type="SUPFAM" id="SSF51621">
    <property type="entry name" value="Phosphoenolpyruvate/pyruvate domain"/>
    <property type="match status" value="1"/>
</dbReference>
<feature type="chain" id="PRO_0000184855" description="3-methyl-2-oxobutanoate hydroxymethyltransferase">
    <location>
        <begin position="1"/>
        <end position="265"/>
    </location>
</feature>
<feature type="active site" description="Proton acceptor" evidence="1">
    <location>
        <position position="183"/>
    </location>
</feature>
<feature type="binding site" evidence="1">
    <location>
        <begin position="44"/>
        <end position="45"/>
    </location>
    <ligand>
        <name>3-methyl-2-oxobutanoate</name>
        <dbReference type="ChEBI" id="CHEBI:11851"/>
    </ligand>
</feature>
<feature type="binding site" evidence="1">
    <location>
        <position position="44"/>
    </location>
    <ligand>
        <name>Mg(2+)</name>
        <dbReference type="ChEBI" id="CHEBI:18420"/>
    </ligand>
</feature>
<feature type="binding site" evidence="1">
    <location>
        <position position="83"/>
    </location>
    <ligand>
        <name>3-methyl-2-oxobutanoate</name>
        <dbReference type="ChEBI" id="CHEBI:11851"/>
    </ligand>
</feature>
<feature type="binding site" evidence="1">
    <location>
        <position position="83"/>
    </location>
    <ligand>
        <name>Mg(2+)</name>
        <dbReference type="ChEBI" id="CHEBI:18420"/>
    </ligand>
</feature>
<feature type="binding site" evidence="1">
    <location>
        <position position="113"/>
    </location>
    <ligand>
        <name>3-methyl-2-oxobutanoate</name>
        <dbReference type="ChEBI" id="CHEBI:11851"/>
    </ligand>
</feature>
<feature type="binding site" evidence="1">
    <location>
        <position position="115"/>
    </location>
    <ligand>
        <name>Mg(2+)</name>
        <dbReference type="ChEBI" id="CHEBI:18420"/>
    </ligand>
</feature>
<protein>
    <recommendedName>
        <fullName evidence="1">3-methyl-2-oxobutanoate hydroxymethyltransferase</fullName>
        <ecNumber evidence="1">2.1.2.11</ecNumber>
    </recommendedName>
    <alternativeName>
        <fullName evidence="1">Ketopantoate hydroxymethyltransferase</fullName>
        <shortName evidence="1">KPHMT</shortName>
    </alternativeName>
</protein>
<gene>
    <name evidence="1" type="primary">panB</name>
    <name type="ordered locus">LIC_13163</name>
</gene>
<comment type="function">
    <text evidence="1">Catalyzes the reversible reaction in which hydroxymethyl group from 5,10-methylenetetrahydrofolate is transferred onto alpha-ketoisovalerate to form ketopantoate.</text>
</comment>
<comment type="catalytic activity">
    <reaction evidence="1">
        <text>3-methyl-2-oxobutanoate + (6R)-5,10-methylene-5,6,7,8-tetrahydrofolate + H2O = 2-dehydropantoate + (6S)-5,6,7,8-tetrahydrofolate</text>
        <dbReference type="Rhea" id="RHEA:11824"/>
        <dbReference type="ChEBI" id="CHEBI:11561"/>
        <dbReference type="ChEBI" id="CHEBI:11851"/>
        <dbReference type="ChEBI" id="CHEBI:15377"/>
        <dbReference type="ChEBI" id="CHEBI:15636"/>
        <dbReference type="ChEBI" id="CHEBI:57453"/>
        <dbReference type="EC" id="2.1.2.11"/>
    </reaction>
</comment>
<comment type="cofactor">
    <cofactor evidence="1">
        <name>Mg(2+)</name>
        <dbReference type="ChEBI" id="CHEBI:18420"/>
    </cofactor>
    <text evidence="1">Binds 1 Mg(2+) ion per subunit.</text>
</comment>
<comment type="pathway">
    <text evidence="1">Cofactor biosynthesis; (R)-pantothenate biosynthesis; (R)-pantoate from 3-methyl-2-oxobutanoate: step 1/2.</text>
</comment>
<comment type="subunit">
    <text evidence="1">Homodecamer; pentamer of dimers.</text>
</comment>
<comment type="subcellular location">
    <subcellularLocation>
        <location evidence="1">Cytoplasm</location>
    </subcellularLocation>
</comment>
<comment type="similarity">
    <text evidence="1">Belongs to the PanB family.</text>
</comment>
<reference key="1">
    <citation type="journal article" date="2004" name="J. Bacteriol.">
        <title>Comparative genomics of two Leptospira interrogans serovars reveals novel insights into physiology and pathogenesis.</title>
        <authorList>
            <person name="Nascimento A.L.T.O."/>
            <person name="Ko A.I."/>
            <person name="Martins E.A.L."/>
            <person name="Monteiro-Vitorello C.B."/>
            <person name="Ho P.L."/>
            <person name="Haake D.A."/>
            <person name="Verjovski-Almeida S."/>
            <person name="Hartskeerl R.A."/>
            <person name="Marques M.V."/>
            <person name="Oliveira M.C."/>
            <person name="Menck C.F.M."/>
            <person name="Leite L.C.C."/>
            <person name="Carrer H."/>
            <person name="Coutinho L.L."/>
            <person name="Degrave W.M."/>
            <person name="Dellagostin O.A."/>
            <person name="El-Dorry H."/>
            <person name="Ferro E.S."/>
            <person name="Ferro M.I.T."/>
            <person name="Furlan L.R."/>
            <person name="Gamberini M."/>
            <person name="Giglioti E.A."/>
            <person name="Goes-Neto A."/>
            <person name="Goldman G.H."/>
            <person name="Goldman M.H.S."/>
            <person name="Harakava R."/>
            <person name="Jeronimo S.M.B."/>
            <person name="Junqueira-de-Azevedo I.L.M."/>
            <person name="Kimura E.T."/>
            <person name="Kuramae E.E."/>
            <person name="Lemos E.G.M."/>
            <person name="Lemos M.V.F."/>
            <person name="Marino C.L."/>
            <person name="Nunes L.R."/>
            <person name="de Oliveira R.C."/>
            <person name="Pereira G.G."/>
            <person name="Reis M.S."/>
            <person name="Schriefer A."/>
            <person name="Siqueira W.J."/>
            <person name="Sommer P."/>
            <person name="Tsai S.M."/>
            <person name="Simpson A.J.G."/>
            <person name="Ferro J.A."/>
            <person name="Camargo L.E.A."/>
            <person name="Kitajima J.P."/>
            <person name="Setubal J.C."/>
            <person name="Van Sluys M.A."/>
        </authorList>
    </citation>
    <scope>NUCLEOTIDE SEQUENCE [LARGE SCALE GENOMIC DNA]</scope>
    <source>
        <strain>Fiocruz L1-130</strain>
    </source>
</reference>
<evidence type="ECO:0000255" key="1">
    <source>
        <dbReference type="HAMAP-Rule" id="MF_00156"/>
    </source>
</evidence>
<sequence>MKNIHKIFSPEKKGKEKISVVTCYDFSFARILNETEIDSILVGDSLGMVFQGNTSTLPVTLEEMIYHTKAVRRGAPDKFLIADLPFLSYQTSIEEGIRSAGKIMKESDCDAVKIEGGSEFICELVSILKQIGVPVMGHLGLTPQSVHVFGGHRVQGKGEESSSKLLKESISLFESGVFSMVLEMIPAELGKKVSQEVGVPTIGIGAGSDCDGQVLVLNDLLGLDINFQPKFLKKFSNLHSIVKEAIADYDKEVKSGEFPGKDHSF</sequence>
<proteinExistence type="inferred from homology"/>
<organism>
    <name type="scientific">Leptospira interrogans serogroup Icterohaemorrhagiae serovar copenhageni (strain Fiocruz L1-130)</name>
    <dbReference type="NCBI Taxonomy" id="267671"/>
    <lineage>
        <taxon>Bacteria</taxon>
        <taxon>Pseudomonadati</taxon>
        <taxon>Spirochaetota</taxon>
        <taxon>Spirochaetia</taxon>
        <taxon>Leptospirales</taxon>
        <taxon>Leptospiraceae</taxon>
        <taxon>Leptospira</taxon>
    </lineage>
</organism>
<accession>Q72MN0</accession>
<keyword id="KW-0963">Cytoplasm</keyword>
<keyword id="KW-0460">Magnesium</keyword>
<keyword id="KW-0479">Metal-binding</keyword>
<keyword id="KW-0566">Pantothenate biosynthesis</keyword>
<keyword id="KW-0808">Transferase</keyword>
<name>PANB_LEPIC</name>